<comment type="function">
    <text evidence="1">ATP-binding (A) component of a common energy-coupling factor (ECF) ABC-transporter complex. Unlike classic ABC transporters this ECF transporter provides the energy necessary to transport a number of different substrates.</text>
</comment>
<comment type="subunit">
    <text evidence="1">Forms a stable energy-coupling factor (ECF) transporter complex composed of 2 membrane-embedded substrate-binding proteins (S component), 2 ATP-binding proteins (A component) and 2 transmembrane proteins (T component).</text>
</comment>
<comment type="subcellular location">
    <subcellularLocation>
        <location evidence="1">Cell membrane</location>
        <topology evidence="1">Peripheral membrane protein</topology>
    </subcellularLocation>
</comment>
<comment type="similarity">
    <text evidence="1">Belongs to the ABC transporter superfamily. Energy-coupling factor EcfA family.</text>
</comment>
<keyword id="KW-0067">ATP-binding</keyword>
<keyword id="KW-1003">Cell membrane</keyword>
<keyword id="KW-0472">Membrane</keyword>
<keyword id="KW-0547">Nucleotide-binding</keyword>
<keyword id="KW-1278">Translocase</keyword>
<keyword id="KW-0813">Transport</keyword>
<gene>
    <name evidence="1" type="primary">ecfA2</name>
    <name type="synonym">cbiO2</name>
    <name type="ordered locus">SAUSA300_2175</name>
</gene>
<feature type="chain" id="PRO_0000287985" description="Energy-coupling factor transporter ATP-binding protein EcfA2">
    <location>
        <begin position="1"/>
        <end position="286"/>
    </location>
</feature>
<feature type="domain" description="ABC transporter" evidence="1">
    <location>
        <begin position="3"/>
        <end position="246"/>
    </location>
</feature>
<feature type="binding site" evidence="1">
    <location>
        <begin position="40"/>
        <end position="47"/>
    </location>
    <ligand>
        <name>ATP</name>
        <dbReference type="ChEBI" id="CHEBI:30616"/>
    </ligand>
</feature>
<protein>
    <recommendedName>
        <fullName evidence="1">Energy-coupling factor transporter ATP-binding protein EcfA2</fullName>
        <shortName evidence="1">ECF transporter A component EcfA2</shortName>
        <ecNumber evidence="1">7.-.-.-</ecNumber>
    </recommendedName>
</protein>
<dbReference type="EC" id="7.-.-.-" evidence="1"/>
<dbReference type="EMBL" id="CP000255">
    <property type="protein sequence ID" value="ABD20821.1"/>
    <property type="molecule type" value="Genomic_DNA"/>
</dbReference>
<dbReference type="RefSeq" id="WP_000155386.1">
    <property type="nucleotide sequence ID" value="NZ_CP027476.1"/>
</dbReference>
<dbReference type="SMR" id="Q2FER8"/>
<dbReference type="KEGG" id="saa:SAUSA300_2175"/>
<dbReference type="HOGENOM" id="CLU_000604_1_22_9"/>
<dbReference type="OMA" id="MIMYDEP"/>
<dbReference type="Proteomes" id="UP000001939">
    <property type="component" value="Chromosome"/>
</dbReference>
<dbReference type="GO" id="GO:0043190">
    <property type="term" value="C:ATP-binding cassette (ABC) transporter complex"/>
    <property type="evidence" value="ECO:0007669"/>
    <property type="project" value="TreeGrafter"/>
</dbReference>
<dbReference type="GO" id="GO:0005524">
    <property type="term" value="F:ATP binding"/>
    <property type="evidence" value="ECO:0007669"/>
    <property type="project" value="UniProtKB-KW"/>
</dbReference>
<dbReference type="GO" id="GO:0016887">
    <property type="term" value="F:ATP hydrolysis activity"/>
    <property type="evidence" value="ECO:0007669"/>
    <property type="project" value="InterPro"/>
</dbReference>
<dbReference type="GO" id="GO:0042626">
    <property type="term" value="F:ATPase-coupled transmembrane transporter activity"/>
    <property type="evidence" value="ECO:0007669"/>
    <property type="project" value="TreeGrafter"/>
</dbReference>
<dbReference type="CDD" id="cd03225">
    <property type="entry name" value="ABC_cobalt_CbiO_domain1"/>
    <property type="match status" value="1"/>
</dbReference>
<dbReference type="FunFam" id="3.40.50.300:FF:000224">
    <property type="entry name" value="Energy-coupling factor transporter ATP-binding protein EcfA"/>
    <property type="match status" value="1"/>
</dbReference>
<dbReference type="Gene3D" id="3.40.50.300">
    <property type="entry name" value="P-loop containing nucleotide triphosphate hydrolases"/>
    <property type="match status" value="1"/>
</dbReference>
<dbReference type="InterPro" id="IPR003593">
    <property type="entry name" value="AAA+_ATPase"/>
</dbReference>
<dbReference type="InterPro" id="IPR003439">
    <property type="entry name" value="ABC_transporter-like_ATP-bd"/>
</dbReference>
<dbReference type="InterPro" id="IPR017871">
    <property type="entry name" value="ABC_transporter-like_CS"/>
</dbReference>
<dbReference type="InterPro" id="IPR015856">
    <property type="entry name" value="ABC_transpr_CbiO/EcfA_su"/>
</dbReference>
<dbReference type="InterPro" id="IPR050095">
    <property type="entry name" value="ECF_ABC_transporter_ATP-bd"/>
</dbReference>
<dbReference type="InterPro" id="IPR030946">
    <property type="entry name" value="EcfA2"/>
</dbReference>
<dbReference type="InterPro" id="IPR027417">
    <property type="entry name" value="P-loop_NTPase"/>
</dbReference>
<dbReference type="NCBIfam" id="TIGR04521">
    <property type="entry name" value="ECF_ATPase_2"/>
    <property type="match status" value="1"/>
</dbReference>
<dbReference type="NCBIfam" id="NF010166">
    <property type="entry name" value="PRK13646.1"/>
    <property type="match status" value="1"/>
</dbReference>
<dbReference type="PANTHER" id="PTHR43553:SF27">
    <property type="entry name" value="ENERGY-COUPLING FACTOR TRANSPORTER ATP-BINDING PROTEIN ECFA2"/>
    <property type="match status" value="1"/>
</dbReference>
<dbReference type="PANTHER" id="PTHR43553">
    <property type="entry name" value="HEAVY METAL TRANSPORTER"/>
    <property type="match status" value="1"/>
</dbReference>
<dbReference type="Pfam" id="PF00005">
    <property type="entry name" value="ABC_tran"/>
    <property type="match status" value="1"/>
</dbReference>
<dbReference type="SMART" id="SM00382">
    <property type="entry name" value="AAA"/>
    <property type="match status" value="1"/>
</dbReference>
<dbReference type="SUPFAM" id="SSF52540">
    <property type="entry name" value="P-loop containing nucleoside triphosphate hydrolases"/>
    <property type="match status" value="1"/>
</dbReference>
<dbReference type="PROSITE" id="PS00211">
    <property type="entry name" value="ABC_TRANSPORTER_1"/>
    <property type="match status" value="1"/>
</dbReference>
<dbReference type="PROSITE" id="PS50893">
    <property type="entry name" value="ABC_TRANSPORTER_2"/>
    <property type="match status" value="1"/>
</dbReference>
<dbReference type="PROSITE" id="PS51246">
    <property type="entry name" value="CBIO"/>
    <property type="match status" value="1"/>
</dbReference>
<accession>Q2FER8</accession>
<reference key="1">
    <citation type="journal article" date="2006" name="Lancet">
        <title>Complete genome sequence of USA300, an epidemic clone of community-acquired meticillin-resistant Staphylococcus aureus.</title>
        <authorList>
            <person name="Diep B.A."/>
            <person name="Gill S.R."/>
            <person name="Chang R.F."/>
            <person name="Phan T.H."/>
            <person name="Chen J.H."/>
            <person name="Davidson M.G."/>
            <person name="Lin F."/>
            <person name="Lin J."/>
            <person name="Carleton H.A."/>
            <person name="Mongodin E.F."/>
            <person name="Sensabaugh G.F."/>
            <person name="Perdreau-Remington F."/>
        </authorList>
    </citation>
    <scope>NUCLEOTIDE SEQUENCE [LARGE SCALE GENOMIC DNA]</scope>
    <source>
        <strain>USA300</strain>
    </source>
</reference>
<proteinExistence type="inferred from homology"/>
<organism>
    <name type="scientific">Staphylococcus aureus (strain USA300)</name>
    <dbReference type="NCBI Taxonomy" id="367830"/>
    <lineage>
        <taxon>Bacteria</taxon>
        <taxon>Bacillati</taxon>
        <taxon>Bacillota</taxon>
        <taxon>Bacilli</taxon>
        <taxon>Bacillales</taxon>
        <taxon>Staphylococcaceae</taxon>
        <taxon>Staphylococcus</taxon>
    </lineage>
</organism>
<sequence length="286" mass="32919">MTIRFDNVSYTYQKGTPYQHQAIHDVNTEFEQGKYYAIVGQTGSGKSTLIQNINALLKPTTGTVTVDDITITHKTKDKYIRPVRKRIGMVFQFPESQLFEDTVEREMIFGPKNFKMNLDEAKNYAHRLLMDLGFSRDVMSQSPFQMSGGQMRKIAIVSILAMNPDIIVVDEPTAGLDPQSKRQVMRLLKSLQTDENKAIILISHDMNEVARYADEVIVMKEGSIVSQTSPKELFKDKKKLADWHIGLPEIVQLQYDFEQKYQTKLKDIALTEEAFVSLYKEWQHEK</sequence>
<evidence type="ECO:0000255" key="1">
    <source>
        <dbReference type="HAMAP-Rule" id="MF_01710"/>
    </source>
</evidence>
<name>ECFA2_STAA3</name>